<evidence type="ECO:0000255" key="1">
    <source>
        <dbReference type="HAMAP-Rule" id="MF_01347"/>
    </source>
</evidence>
<name>ATPB_ACTP2</name>
<feature type="chain" id="PRO_1000055089" description="ATP synthase subunit beta">
    <location>
        <begin position="1"/>
        <end position="457"/>
    </location>
</feature>
<feature type="binding site" evidence="1">
    <location>
        <begin position="147"/>
        <end position="154"/>
    </location>
    <ligand>
        <name>ATP</name>
        <dbReference type="ChEBI" id="CHEBI:30616"/>
    </ligand>
</feature>
<dbReference type="EC" id="7.1.2.2" evidence="1"/>
<dbReference type="EMBL" id="CP000569">
    <property type="protein sequence ID" value="ABN74730.1"/>
    <property type="molecule type" value="Genomic_DNA"/>
</dbReference>
<dbReference type="RefSeq" id="WP_005599061.1">
    <property type="nucleotide sequence ID" value="NC_009053.1"/>
</dbReference>
<dbReference type="SMR" id="A3N2U4"/>
<dbReference type="STRING" id="416269.APL_1646"/>
<dbReference type="EnsemblBacteria" id="ABN74730">
    <property type="protein sequence ID" value="ABN74730"/>
    <property type="gene ID" value="APL_1646"/>
</dbReference>
<dbReference type="GeneID" id="92743772"/>
<dbReference type="KEGG" id="apl:APL_1646"/>
<dbReference type="eggNOG" id="COG0055">
    <property type="taxonomic scope" value="Bacteria"/>
</dbReference>
<dbReference type="HOGENOM" id="CLU_022398_0_2_6"/>
<dbReference type="Proteomes" id="UP000001432">
    <property type="component" value="Chromosome"/>
</dbReference>
<dbReference type="GO" id="GO:0005886">
    <property type="term" value="C:plasma membrane"/>
    <property type="evidence" value="ECO:0007669"/>
    <property type="project" value="UniProtKB-SubCell"/>
</dbReference>
<dbReference type="GO" id="GO:0045259">
    <property type="term" value="C:proton-transporting ATP synthase complex"/>
    <property type="evidence" value="ECO:0007669"/>
    <property type="project" value="UniProtKB-KW"/>
</dbReference>
<dbReference type="GO" id="GO:0005524">
    <property type="term" value="F:ATP binding"/>
    <property type="evidence" value="ECO:0007669"/>
    <property type="project" value="UniProtKB-UniRule"/>
</dbReference>
<dbReference type="GO" id="GO:0016887">
    <property type="term" value="F:ATP hydrolysis activity"/>
    <property type="evidence" value="ECO:0007669"/>
    <property type="project" value="InterPro"/>
</dbReference>
<dbReference type="GO" id="GO:0046933">
    <property type="term" value="F:proton-transporting ATP synthase activity, rotational mechanism"/>
    <property type="evidence" value="ECO:0007669"/>
    <property type="project" value="UniProtKB-UniRule"/>
</dbReference>
<dbReference type="CDD" id="cd18110">
    <property type="entry name" value="ATP-synt_F1_beta_C"/>
    <property type="match status" value="1"/>
</dbReference>
<dbReference type="CDD" id="cd18115">
    <property type="entry name" value="ATP-synt_F1_beta_N"/>
    <property type="match status" value="1"/>
</dbReference>
<dbReference type="CDD" id="cd01133">
    <property type="entry name" value="F1-ATPase_beta_CD"/>
    <property type="match status" value="1"/>
</dbReference>
<dbReference type="FunFam" id="1.10.1140.10:FF:000001">
    <property type="entry name" value="ATP synthase subunit beta"/>
    <property type="match status" value="1"/>
</dbReference>
<dbReference type="FunFam" id="2.40.10.170:FF:000003">
    <property type="entry name" value="ATP synthase subunit beta"/>
    <property type="match status" value="1"/>
</dbReference>
<dbReference type="FunFam" id="3.40.50.300:FF:000004">
    <property type="entry name" value="ATP synthase subunit beta"/>
    <property type="match status" value="1"/>
</dbReference>
<dbReference type="Gene3D" id="2.40.10.170">
    <property type="match status" value="1"/>
</dbReference>
<dbReference type="Gene3D" id="1.10.1140.10">
    <property type="entry name" value="Bovine Mitochondrial F1-atpase, Atp Synthase Beta Chain, Chain D, domain 3"/>
    <property type="match status" value="1"/>
</dbReference>
<dbReference type="Gene3D" id="3.40.50.300">
    <property type="entry name" value="P-loop containing nucleotide triphosphate hydrolases"/>
    <property type="match status" value="1"/>
</dbReference>
<dbReference type="HAMAP" id="MF_01347">
    <property type="entry name" value="ATP_synth_beta_bact"/>
    <property type="match status" value="1"/>
</dbReference>
<dbReference type="InterPro" id="IPR003593">
    <property type="entry name" value="AAA+_ATPase"/>
</dbReference>
<dbReference type="InterPro" id="IPR055190">
    <property type="entry name" value="ATP-synt_VA_C"/>
</dbReference>
<dbReference type="InterPro" id="IPR005722">
    <property type="entry name" value="ATP_synth_F1_bsu"/>
</dbReference>
<dbReference type="InterPro" id="IPR020003">
    <property type="entry name" value="ATPase_a/bsu_AS"/>
</dbReference>
<dbReference type="InterPro" id="IPR050053">
    <property type="entry name" value="ATPase_alpha/beta_chains"/>
</dbReference>
<dbReference type="InterPro" id="IPR004100">
    <property type="entry name" value="ATPase_F1/V1/A1_a/bsu_N"/>
</dbReference>
<dbReference type="InterPro" id="IPR036121">
    <property type="entry name" value="ATPase_F1/V1/A1_a/bsu_N_sf"/>
</dbReference>
<dbReference type="InterPro" id="IPR000194">
    <property type="entry name" value="ATPase_F1/V1/A1_a/bsu_nucl-bd"/>
</dbReference>
<dbReference type="InterPro" id="IPR024034">
    <property type="entry name" value="ATPase_F1/V1_b/a_C"/>
</dbReference>
<dbReference type="InterPro" id="IPR027417">
    <property type="entry name" value="P-loop_NTPase"/>
</dbReference>
<dbReference type="NCBIfam" id="TIGR01039">
    <property type="entry name" value="atpD"/>
    <property type="match status" value="1"/>
</dbReference>
<dbReference type="PANTHER" id="PTHR15184">
    <property type="entry name" value="ATP SYNTHASE"/>
    <property type="match status" value="1"/>
</dbReference>
<dbReference type="PANTHER" id="PTHR15184:SF71">
    <property type="entry name" value="ATP SYNTHASE SUBUNIT BETA, MITOCHONDRIAL"/>
    <property type="match status" value="1"/>
</dbReference>
<dbReference type="Pfam" id="PF00006">
    <property type="entry name" value="ATP-synt_ab"/>
    <property type="match status" value="1"/>
</dbReference>
<dbReference type="Pfam" id="PF02874">
    <property type="entry name" value="ATP-synt_ab_N"/>
    <property type="match status" value="1"/>
</dbReference>
<dbReference type="Pfam" id="PF22919">
    <property type="entry name" value="ATP-synt_VA_C"/>
    <property type="match status" value="1"/>
</dbReference>
<dbReference type="SMART" id="SM00382">
    <property type="entry name" value="AAA"/>
    <property type="match status" value="1"/>
</dbReference>
<dbReference type="SUPFAM" id="SSF47917">
    <property type="entry name" value="C-terminal domain of alpha and beta subunits of F1 ATP synthase"/>
    <property type="match status" value="1"/>
</dbReference>
<dbReference type="SUPFAM" id="SSF50615">
    <property type="entry name" value="N-terminal domain of alpha and beta subunits of F1 ATP synthase"/>
    <property type="match status" value="1"/>
</dbReference>
<dbReference type="SUPFAM" id="SSF52540">
    <property type="entry name" value="P-loop containing nucleoside triphosphate hydrolases"/>
    <property type="match status" value="1"/>
</dbReference>
<dbReference type="PROSITE" id="PS00152">
    <property type="entry name" value="ATPASE_ALPHA_BETA"/>
    <property type="match status" value="1"/>
</dbReference>
<organism>
    <name type="scientific">Actinobacillus pleuropneumoniae serotype 5b (strain L20)</name>
    <dbReference type="NCBI Taxonomy" id="416269"/>
    <lineage>
        <taxon>Bacteria</taxon>
        <taxon>Pseudomonadati</taxon>
        <taxon>Pseudomonadota</taxon>
        <taxon>Gammaproteobacteria</taxon>
        <taxon>Pasteurellales</taxon>
        <taxon>Pasteurellaceae</taxon>
        <taxon>Actinobacillus</taxon>
    </lineage>
</organism>
<gene>
    <name evidence="1" type="primary">atpD</name>
    <name type="ordered locus">APL_1646</name>
</gene>
<proteinExistence type="inferred from homology"/>
<sequence>MATGKIVQIIGAVIDVEFPQDAVPKVYDALKVESGLTLEVQQQLGGGLVRCIALGTSDGLKRGLKVENTGNPIQVPVGTKTLGRIMNVLGEPIDEKGPIGEEARWDIHRAAPSYEEQSNSTELLETGIKVIDLICPFAKGGKVGLFGGAGVGKTVNMMELIRNIAIEHSGYSVFAGVGERTREGNDFYHEMTDSNVLDKVSLVYGQMNEPPGNRLRVALTGLTMAEKFRDEGRDVLFFVDNIYRYTLAGTEVSALLGRMPSAVGYQPTLAEEMGVLQERITSTKTGSITSVQAVYVPADDLTDPSPATTFAHLDSTVVLSRNIASLGIYPAVDPLDSTSRQLDPLVVGEEHYNVARGVQGTLQRYKELKDIIAILGMDELSEDDKLVVARARKIERFLSQPFFVAEVFTGSPGKYVSLKDTIRGFKGILEGEFDHIPEQAFYMAGSIDEVVERASKM</sequence>
<keyword id="KW-0066">ATP synthesis</keyword>
<keyword id="KW-0067">ATP-binding</keyword>
<keyword id="KW-0997">Cell inner membrane</keyword>
<keyword id="KW-1003">Cell membrane</keyword>
<keyword id="KW-0139">CF(1)</keyword>
<keyword id="KW-0375">Hydrogen ion transport</keyword>
<keyword id="KW-0406">Ion transport</keyword>
<keyword id="KW-0472">Membrane</keyword>
<keyword id="KW-0547">Nucleotide-binding</keyword>
<keyword id="KW-1185">Reference proteome</keyword>
<keyword id="KW-1278">Translocase</keyword>
<keyword id="KW-0813">Transport</keyword>
<reference key="1">
    <citation type="journal article" date="2008" name="J. Bacteriol.">
        <title>The complete genome sequence of Actinobacillus pleuropneumoniae L20 (serotype 5b).</title>
        <authorList>
            <person name="Foote S.J."/>
            <person name="Bosse J.T."/>
            <person name="Bouevitch A.B."/>
            <person name="Langford P.R."/>
            <person name="Young N.M."/>
            <person name="Nash J.H.E."/>
        </authorList>
    </citation>
    <scope>NUCLEOTIDE SEQUENCE [LARGE SCALE GENOMIC DNA]</scope>
    <source>
        <strain>L20</strain>
    </source>
</reference>
<protein>
    <recommendedName>
        <fullName evidence="1">ATP synthase subunit beta</fullName>
        <ecNumber evidence="1">7.1.2.2</ecNumber>
    </recommendedName>
    <alternativeName>
        <fullName evidence="1">ATP synthase F1 sector subunit beta</fullName>
    </alternativeName>
    <alternativeName>
        <fullName evidence="1">F-ATPase subunit beta</fullName>
    </alternativeName>
</protein>
<comment type="function">
    <text evidence="1">Produces ATP from ADP in the presence of a proton gradient across the membrane. The catalytic sites are hosted primarily by the beta subunits.</text>
</comment>
<comment type="catalytic activity">
    <reaction evidence="1">
        <text>ATP + H2O + 4 H(+)(in) = ADP + phosphate + 5 H(+)(out)</text>
        <dbReference type="Rhea" id="RHEA:57720"/>
        <dbReference type="ChEBI" id="CHEBI:15377"/>
        <dbReference type="ChEBI" id="CHEBI:15378"/>
        <dbReference type="ChEBI" id="CHEBI:30616"/>
        <dbReference type="ChEBI" id="CHEBI:43474"/>
        <dbReference type="ChEBI" id="CHEBI:456216"/>
        <dbReference type="EC" id="7.1.2.2"/>
    </reaction>
</comment>
<comment type="subunit">
    <text evidence="1">F-type ATPases have 2 components, CF(1) - the catalytic core - and CF(0) - the membrane proton channel. CF(1) has five subunits: alpha(3), beta(3), gamma(1), delta(1), epsilon(1). CF(0) has three main subunits: a(1), b(2) and c(9-12). The alpha and beta chains form an alternating ring which encloses part of the gamma chain. CF(1) is attached to CF(0) by a central stalk formed by the gamma and epsilon chains, while a peripheral stalk is formed by the delta and b chains.</text>
</comment>
<comment type="subcellular location">
    <subcellularLocation>
        <location evidence="1">Cell inner membrane</location>
        <topology evidence="1">Peripheral membrane protein</topology>
    </subcellularLocation>
</comment>
<comment type="similarity">
    <text evidence="1">Belongs to the ATPase alpha/beta chains family.</text>
</comment>
<accession>A3N2U4</accession>